<comment type="function">
    <text evidence="1">Cell division inhibitor that blocks the formation of polar Z ring septums. Rapidly oscillates between the poles of the cell to destabilize FtsZ filaments that have formed before they mature into polar Z rings. Prevents FtsZ polymerization (By similarity).</text>
</comment>
<comment type="subunit">
    <text evidence="1">Interacts with MinD and FtsZ.</text>
</comment>
<comment type="similarity">
    <text evidence="2">Belongs to the MinC family.</text>
</comment>
<accession>Q55901</accession>
<accession>P74802</accession>
<name>MINC_SYNY3</name>
<protein>
    <recommendedName>
        <fullName>Probable septum site-determining protein MinC</fullName>
    </recommendedName>
</protein>
<evidence type="ECO:0000250" key="1"/>
<evidence type="ECO:0000305" key="2"/>
<proteinExistence type="inferred from homology"/>
<keyword id="KW-0131">Cell cycle</keyword>
<keyword id="KW-0132">Cell division</keyword>
<keyword id="KW-1185">Reference proteome</keyword>
<keyword id="KW-0717">Septation</keyword>
<gene>
    <name type="primary">minC</name>
    <name type="ordered locus">sll0288</name>
</gene>
<dbReference type="EMBL" id="BA000022">
    <property type="protein sequence ID" value="BAA10664.2"/>
    <property type="molecule type" value="Genomic_DNA"/>
</dbReference>
<dbReference type="PIR" id="S76972">
    <property type="entry name" value="S76972"/>
</dbReference>
<dbReference type="SMR" id="Q55901"/>
<dbReference type="IntAct" id="Q55901">
    <property type="interactions" value="4"/>
</dbReference>
<dbReference type="STRING" id="1148.gene:10500168"/>
<dbReference type="PaxDb" id="1148-14595186"/>
<dbReference type="EnsemblBacteria" id="BAA10664">
    <property type="protein sequence ID" value="BAA10664"/>
    <property type="gene ID" value="BAA10664"/>
</dbReference>
<dbReference type="KEGG" id="syn:sll0288"/>
<dbReference type="eggNOG" id="COG0850">
    <property type="taxonomic scope" value="Bacteria"/>
</dbReference>
<dbReference type="InParanoid" id="Q55901"/>
<dbReference type="PhylomeDB" id="Q55901"/>
<dbReference type="Proteomes" id="UP000001425">
    <property type="component" value="Chromosome"/>
</dbReference>
<dbReference type="GO" id="GO:0000902">
    <property type="term" value="P:cell morphogenesis"/>
    <property type="evidence" value="ECO:0007669"/>
    <property type="project" value="InterPro"/>
</dbReference>
<dbReference type="GO" id="GO:0007105">
    <property type="term" value="P:cytokinesis, division site positioning"/>
    <property type="evidence" value="ECO:0000314"/>
    <property type="project" value="UniProtKB"/>
</dbReference>
<dbReference type="GO" id="GO:0000917">
    <property type="term" value="P:division septum assembly"/>
    <property type="evidence" value="ECO:0007669"/>
    <property type="project" value="UniProtKB-KW"/>
</dbReference>
<dbReference type="GO" id="GO:1901891">
    <property type="term" value="P:regulation of cell septum assembly"/>
    <property type="evidence" value="ECO:0007669"/>
    <property type="project" value="InterPro"/>
</dbReference>
<dbReference type="Gene3D" id="2.160.20.70">
    <property type="match status" value="1"/>
</dbReference>
<dbReference type="HAMAP" id="MF_00267">
    <property type="entry name" value="MinC"/>
    <property type="match status" value="1"/>
</dbReference>
<dbReference type="InterPro" id="IPR016098">
    <property type="entry name" value="CAP/MinC_C"/>
</dbReference>
<dbReference type="InterPro" id="IPR013033">
    <property type="entry name" value="MinC"/>
</dbReference>
<dbReference type="InterPro" id="IPR036145">
    <property type="entry name" value="MinC_C_sf"/>
</dbReference>
<dbReference type="InterPro" id="IPR005526">
    <property type="entry name" value="Septum_form_inhib_MinC_C"/>
</dbReference>
<dbReference type="NCBIfam" id="TIGR01222">
    <property type="entry name" value="minC"/>
    <property type="match status" value="1"/>
</dbReference>
<dbReference type="NCBIfam" id="NF001778">
    <property type="entry name" value="PRK00513.2-4"/>
    <property type="match status" value="1"/>
</dbReference>
<dbReference type="PANTHER" id="PTHR34108">
    <property type="entry name" value="SEPTUM SITE-DETERMINING PROTEIN MINC"/>
    <property type="match status" value="1"/>
</dbReference>
<dbReference type="PANTHER" id="PTHR34108:SF1">
    <property type="entry name" value="SEPTUM SITE-DETERMINING PROTEIN MINC"/>
    <property type="match status" value="1"/>
</dbReference>
<dbReference type="Pfam" id="PF03775">
    <property type="entry name" value="MinC_C"/>
    <property type="match status" value="1"/>
</dbReference>
<dbReference type="SUPFAM" id="SSF63848">
    <property type="entry name" value="Cell-division inhibitor MinC, C-terminal domain"/>
    <property type="match status" value="1"/>
</dbReference>
<organism>
    <name type="scientific">Synechocystis sp. (strain ATCC 27184 / PCC 6803 / Kazusa)</name>
    <dbReference type="NCBI Taxonomy" id="1111708"/>
    <lineage>
        <taxon>Bacteria</taxon>
        <taxon>Bacillati</taxon>
        <taxon>Cyanobacteriota</taxon>
        <taxon>Cyanophyceae</taxon>
        <taxon>Synechococcales</taxon>
        <taxon>Merismopediaceae</taxon>
        <taxon>Synechocystis</taxon>
    </lineage>
</organism>
<feature type="chain" id="PRO_0000189065" description="Probable septum site-determining protein MinC">
    <location>
        <begin position="1"/>
        <end position="247"/>
    </location>
</feature>
<sequence>MSDDTPHPEWQLVPQGNFVRLSLTLPTVTTAPDSPSLVFSHQQLEQSLGNYLRIMAGRWQDQTLVRLAVNNQLLDARQLQAIAAGLKEQNLTLQWVETNRRQTAVAAASAGLSVDQTMADKPLVDPSETPSLPKPLVVRHTLRSGGEIRHGGDVVIIGDVNPGSSIVADGDILIWGCLRGMAHAGAKGNDQAVIMILRLAACQIRIGDRLARVGADAVDRREPEIAYITSEGIRLTPVRQFQRSALL</sequence>
<reference key="1">
    <citation type="journal article" date="1995" name="DNA Res.">
        <title>Sequence analysis of the genome of the unicellular cyanobacterium Synechocystis sp. strain PCC6803. I. Sequence features in the 1 Mb region from map positions 64% to 92% of the genome.</title>
        <authorList>
            <person name="Kaneko T."/>
            <person name="Tanaka A."/>
            <person name="Sato S."/>
            <person name="Kotani H."/>
            <person name="Sazuka T."/>
            <person name="Miyajima N."/>
            <person name="Sugiura M."/>
            <person name="Tabata S."/>
        </authorList>
    </citation>
    <scope>NUCLEOTIDE SEQUENCE [LARGE SCALE GENOMIC DNA]</scope>
    <source>
        <strain>ATCC 27184 / PCC 6803 / N-1</strain>
    </source>
</reference>
<reference key="2">
    <citation type="journal article" date="1996" name="DNA Res.">
        <title>Sequence analysis of the genome of the unicellular cyanobacterium Synechocystis sp. strain PCC6803. II. Sequence determination of the entire genome and assignment of potential protein-coding regions.</title>
        <authorList>
            <person name="Kaneko T."/>
            <person name="Sato S."/>
            <person name="Kotani H."/>
            <person name="Tanaka A."/>
            <person name="Asamizu E."/>
            <person name="Nakamura Y."/>
            <person name="Miyajima N."/>
            <person name="Hirosawa M."/>
            <person name="Sugiura M."/>
            <person name="Sasamoto S."/>
            <person name="Kimura T."/>
            <person name="Hosouchi T."/>
            <person name="Matsuno A."/>
            <person name="Muraki A."/>
            <person name="Nakazaki N."/>
            <person name="Naruo K."/>
            <person name="Okumura S."/>
            <person name="Shimpo S."/>
            <person name="Takeuchi C."/>
            <person name="Wada T."/>
            <person name="Watanabe A."/>
            <person name="Yamada M."/>
            <person name="Yasuda M."/>
            <person name="Tabata S."/>
        </authorList>
    </citation>
    <scope>NUCLEOTIDE SEQUENCE [LARGE SCALE GENOMIC DNA]</scope>
    <source>
        <strain>ATCC 27184 / PCC 6803 / Kazusa</strain>
    </source>
</reference>